<accession>Q73YW7</accession>
<feature type="chain" id="PRO_0000390595" description="Prokaryotic ubiquitin-like protein Pup">
    <location>
        <begin position="1"/>
        <end position="64"/>
    </location>
</feature>
<feature type="region of interest" description="Disordered" evidence="2">
    <location>
        <begin position="1"/>
        <end position="37"/>
    </location>
</feature>
<feature type="region of interest" description="ARC ATPase binding" evidence="1">
    <location>
        <begin position="21"/>
        <end position="58"/>
    </location>
</feature>
<feature type="coiled-coil region" evidence="1">
    <location>
        <begin position="24"/>
        <end position="52"/>
    </location>
</feature>
<feature type="compositionally biased region" description="Basic and acidic residues" evidence="2">
    <location>
        <begin position="1"/>
        <end position="11"/>
    </location>
</feature>
<feature type="modified residue" description="Deamidated glutamine" evidence="1">
    <location>
        <position position="64"/>
    </location>
</feature>
<feature type="cross-link" description="Isoglutamyl lysine isopeptide (Gln-Lys) (interchain with K-? in acceptor proteins)" evidence="1">
    <location>
        <position position="64"/>
    </location>
</feature>
<dbReference type="EMBL" id="AE016958">
    <property type="protein sequence ID" value="AAS04153.1"/>
    <property type="molecule type" value="Genomic_DNA"/>
</dbReference>
<dbReference type="RefSeq" id="WP_003872163.1">
    <property type="nucleotide sequence ID" value="NZ_CP106873.1"/>
</dbReference>
<dbReference type="SMR" id="Q73YW7"/>
<dbReference type="STRING" id="262316.MAP_1836c"/>
<dbReference type="KEGG" id="mpa:MAP_1836c"/>
<dbReference type="eggNOG" id="ENOG50333JS">
    <property type="taxonomic scope" value="Bacteria"/>
</dbReference>
<dbReference type="HOGENOM" id="CLU_183816_1_0_11"/>
<dbReference type="UniPathway" id="UPA00997"/>
<dbReference type="Proteomes" id="UP000000580">
    <property type="component" value="Chromosome"/>
</dbReference>
<dbReference type="GO" id="GO:0070628">
    <property type="term" value="F:proteasome binding"/>
    <property type="evidence" value="ECO:0007669"/>
    <property type="project" value="UniProtKB-UniRule"/>
</dbReference>
<dbReference type="GO" id="GO:0031386">
    <property type="term" value="F:protein tag activity"/>
    <property type="evidence" value="ECO:0007669"/>
    <property type="project" value="UniProtKB-UniRule"/>
</dbReference>
<dbReference type="GO" id="GO:0019941">
    <property type="term" value="P:modification-dependent protein catabolic process"/>
    <property type="evidence" value="ECO:0007669"/>
    <property type="project" value="UniProtKB-UniRule"/>
</dbReference>
<dbReference type="GO" id="GO:0010498">
    <property type="term" value="P:proteasomal protein catabolic process"/>
    <property type="evidence" value="ECO:0007669"/>
    <property type="project" value="UniProtKB-UniRule"/>
</dbReference>
<dbReference type="GO" id="GO:0070490">
    <property type="term" value="P:protein pupylation"/>
    <property type="evidence" value="ECO:0007669"/>
    <property type="project" value="UniProtKB-UniRule"/>
</dbReference>
<dbReference type="HAMAP" id="MF_02106">
    <property type="entry name" value="Pup"/>
    <property type="match status" value="1"/>
</dbReference>
<dbReference type="InterPro" id="IPR008515">
    <property type="entry name" value="Ubiquitin-like_Pup"/>
</dbReference>
<dbReference type="NCBIfam" id="TIGR03687">
    <property type="entry name" value="pupylate_cterm"/>
    <property type="match status" value="1"/>
</dbReference>
<dbReference type="Pfam" id="PF05639">
    <property type="entry name" value="Pup"/>
    <property type="match status" value="1"/>
</dbReference>
<gene>
    <name evidence="1" type="primary">pup</name>
    <name type="ordered locus">MAP_1836c</name>
</gene>
<protein>
    <recommendedName>
        <fullName evidence="1">Prokaryotic ubiquitin-like protein Pup</fullName>
    </recommendedName>
    <alternativeName>
        <fullName evidence="1">Bacterial ubiquitin-like modifier</fullName>
    </alternativeName>
</protein>
<name>PUP_MYCPA</name>
<sequence length="64" mass="7036">MAQEQTKRGGGGDDEDDFASSTAAGQERREKLAEDTDDLLDEIDDVLEENAEDFVRAYVQKGGQ</sequence>
<keyword id="KW-0175">Coiled coil</keyword>
<keyword id="KW-1017">Isopeptide bond</keyword>
<keyword id="KW-1185">Reference proteome</keyword>
<keyword id="KW-0833">Ubl conjugation pathway</keyword>
<organism>
    <name type="scientific">Mycolicibacterium paratuberculosis (strain ATCC BAA-968 / K-10)</name>
    <name type="common">Mycobacterium paratuberculosis</name>
    <dbReference type="NCBI Taxonomy" id="262316"/>
    <lineage>
        <taxon>Bacteria</taxon>
        <taxon>Bacillati</taxon>
        <taxon>Actinomycetota</taxon>
        <taxon>Actinomycetes</taxon>
        <taxon>Mycobacteriales</taxon>
        <taxon>Mycobacteriaceae</taxon>
        <taxon>Mycobacterium</taxon>
        <taxon>Mycobacterium avium complex (MAC)</taxon>
    </lineage>
</organism>
<evidence type="ECO:0000255" key="1">
    <source>
        <dbReference type="HAMAP-Rule" id="MF_02106"/>
    </source>
</evidence>
<evidence type="ECO:0000256" key="2">
    <source>
        <dbReference type="SAM" id="MobiDB-lite"/>
    </source>
</evidence>
<reference key="1">
    <citation type="journal article" date="2005" name="Proc. Natl. Acad. Sci. U.S.A.">
        <title>The complete genome sequence of Mycobacterium avium subspecies paratuberculosis.</title>
        <authorList>
            <person name="Li L."/>
            <person name="Bannantine J.P."/>
            <person name="Zhang Q."/>
            <person name="Amonsin A."/>
            <person name="May B.J."/>
            <person name="Alt D."/>
            <person name="Banerji N."/>
            <person name="Kanjilal S."/>
            <person name="Kapur V."/>
        </authorList>
    </citation>
    <scope>NUCLEOTIDE SEQUENCE [LARGE SCALE GENOMIC DNA]</scope>
    <source>
        <strain>ATCC BAA-968 / K-10</strain>
    </source>
</reference>
<proteinExistence type="inferred from homology"/>
<comment type="function">
    <text evidence="1">Protein modifier that is covalently attached to lysine residues of substrate proteins, thereby targeting them for proteasomal degradation. The tagging system is termed pupylation.</text>
</comment>
<comment type="pathway">
    <text evidence="1">Protein degradation; proteasomal Pup-dependent pathway.</text>
</comment>
<comment type="subunit">
    <text evidence="1">Strongly interacts with the proteasome-associated ATPase ARC through a hydrophobic interface; the interacting region of Pup lies in its C-terminal half. There is one Pup binding site per ARC hexamer ring.</text>
</comment>
<comment type="domain">
    <text evidence="1">The N-terminal unstructured half of Pup provides a signal required to initiate unfolding and degradation by the proteasome but is not needed for pupylation, while the C-terminal helical half of Pup interacts with ARC to target proteins to the proteasome.</text>
</comment>
<comment type="PTM">
    <text evidence="1">Is modified by deamidation of its C-terminal glutamine to glutamate by the deamidase Dop, a prerequisite to the subsequent pupylation process.</text>
</comment>
<comment type="similarity">
    <text evidence="1">Belongs to the prokaryotic ubiquitin-like protein family.</text>
</comment>